<protein>
    <recommendedName>
        <fullName>Peptide chain release factor 2</fullName>
        <shortName>RF-2</shortName>
    </recommendedName>
</protein>
<dbReference type="EMBL" id="AL591983">
    <property type="protein sequence ID" value="CAD00587.1"/>
    <property type="status" value="ALT_INIT"/>
    <property type="molecule type" value="Genomic_DNA"/>
</dbReference>
<dbReference type="PIR" id="AE1388">
    <property type="entry name" value="AE1388"/>
</dbReference>
<dbReference type="RefSeq" id="NP_466032.1">
    <property type="nucleotide sequence ID" value="NC_003210.1"/>
</dbReference>
<dbReference type="RefSeq" id="WP_010990007.1">
    <property type="nucleotide sequence ID" value="NC_003210.1"/>
</dbReference>
<dbReference type="SMR" id="Q8Y4D8"/>
<dbReference type="STRING" id="169963.gene:17595220"/>
<dbReference type="PaxDb" id="169963-lmo2509"/>
<dbReference type="EnsemblBacteria" id="CAD00587">
    <property type="protein sequence ID" value="CAD00587"/>
    <property type="gene ID" value="CAD00587"/>
</dbReference>
<dbReference type="GeneID" id="986491"/>
<dbReference type="KEGG" id="lmo:lmo2509"/>
<dbReference type="PATRIC" id="fig|169963.11.peg.2569"/>
<dbReference type="eggNOG" id="COG1186">
    <property type="taxonomic scope" value="Bacteria"/>
</dbReference>
<dbReference type="HOGENOM" id="CLU_036856_6_0_9"/>
<dbReference type="OrthoDB" id="9806673at2"/>
<dbReference type="PhylomeDB" id="Q8Y4D8"/>
<dbReference type="Proteomes" id="UP000000817">
    <property type="component" value="Chromosome"/>
</dbReference>
<dbReference type="GO" id="GO:0005737">
    <property type="term" value="C:cytoplasm"/>
    <property type="evidence" value="ECO:0007669"/>
    <property type="project" value="UniProtKB-SubCell"/>
</dbReference>
<dbReference type="GO" id="GO:0016149">
    <property type="term" value="F:translation release factor activity, codon specific"/>
    <property type="evidence" value="ECO:0007669"/>
    <property type="project" value="UniProtKB-UniRule"/>
</dbReference>
<dbReference type="GO" id="GO:0075523">
    <property type="term" value="P:viral translational frameshifting"/>
    <property type="evidence" value="ECO:0007669"/>
    <property type="project" value="UniProtKB-KW"/>
</dbReference>
<dbReference type="FunFam" id="3.30.160.20:FF:000010">
    <property type="entry name" value="Peptide chain release factor 2"/>
    <property type="match status" value="1"/>
</dbReference>
<dbReference type="Gene3D" id="3.30.160.20">
    <property type="match status" value="1"/>
</dbReference>
<dbReference type="Gene3D" id="3.30.70.1660">
    <property type="match status" value="1"/>
</dbReference>
<dbReference type="Gene3D" id="1.20.58.410">
    <property type="entry name" value="Release factor"/>
    <property type="match status" value="1"/>
</dbReference>
<dbReference type="HAMAP" id="MF_00094">
    <property type="entry name" value="Rel_fac_2"/>
    <property type="match status" value="1"/>
</dbReference>
<dbReference type="InterPro" id="IPR005139">
    <property type="entry name" value="PCRF"/>
</dbReference>
<dbReference type="InterPro" id="IPR000352">
    <property type="entry name" value="Pep_chain_release_fac_I"/>
</dbReference>
<dbReference type="InterPro" id="IPR045853">
    <property type="entry name" value="Pep_chain_release_fac_I_sf"/>
</dbReference>
<dbReference type="InterPro" id="IPR004374">
    <property type="entry name" value="PrfB"/>
</dbReference>
<dbReference type="NCBIfam" id="TIGR00020">
    <property type="entry name" value="prfB"/>
    <property type="match status" value="1"/>
</dbReference>
<dbReference type="PANTHER" id="PTHR43116:SF3">
    <property type="entry name" value="CLASS I PEPTIDE CHAIN RELEASE FACTOR"/>
    <property type="match status" value="1"/>
</dbReference>
<dbReference type="PANTHER" id="PTHR43116">
    <property type="entry name" value="PEPTIDE CHAIN RELEASE FACTOR 2"/>
    <property type="match status" value="1"/>
</dbReference>
<dbReference type="Pfam" id="PF03462">
    <property type="entry name" value="PCRF"/>
    <property type="match status" value="1"/>
</dbReference>
<dbReference type="Pfam" id="PF00472">
    <property type="entry name" value="RF-1"/>
    <property type="match status" value="1"/>
</dbReference>
<dbReference type="SMART" id="SM00937">
    <property type="entry name" value="PCRF"/>
    <property type="match status" value="1"/>
</dbReference>
<dbReference type="SUPFAM" id="SSF75620">
    <property type="entry name" value="Release factor"/>
    <property type="match status" value="1"/>
</dbReference>
<dbReference type="PROSITE" id="PS00745">
    <property type="entry name" value="RF_PROK_I"/>
    <property type="match status" value="1"/>
</dbReference>
<reference key="1">
    <citation type="journal article" date="2001" name="Science">
        <title>Comparative genomics of Listeria species.</title>
        <authorList>
            <person name="Glaser P."/>
            <person name="Frangeul L."/>
            <person name="Buchrieser C."/>
            <person name="Rusniok C."/>
            <person name="Amend A."/>
            <person name="Baquero F."/>
            <person name="Berche P."/>
            <person name="Bloecker H."/>
            <person name="Brandt P."/>
            <person name="Chakraborty T."/>
            <person name="Charbit A."/>
            <person name="Chetouani F."/>
            <person name="Couve E."/>
            <person name="de Daruvar A."/>
            <person name="Dehoux P."/>
            <person name="Domann E."/>
            <person name="Dominguez-Bernal G."/>
            <person name="Duchaud E."/>
            <person name="Durant L."/>
            <person name="Dussurget O."/>
            <person name="Entian K.-D."/>
            <person name="Fsihi H."/>
            <person name="Garcia-del Portillo F."/>
            <person name="Garrido P."/>
            <person name="Gautier L."/>
            <person name="Goebel W."/>
            <person name="Gomez-Lopez N."/>
            <person name="Hain T."/>
            <person name="Hauf J."/>
            <person name="Jackson D."/>
            <person name="Jones L.-M."/>
            <person name="Kaerst U."/>
            <person name="Kreft J."/>
            <person name="Kuhn M."/>
            <person name="Kunst F."/>
            <person name="Kurapkat G."/>
            <person name="Madueno E."/>
            <person name="Maitournam A."/>
            <person name="Mata Vicente J."/>
            <person name="Ng E."/>
            <person name="Nedjari H."/>
            <person name="Nordsiek G."/>
            <person name="Novella S."/>
            <person name="de Pablos B."/>
            <person name="Perez-Diaz J.-C."/>
            <person name="Purcell R."/>
            <person name="Remmel B."/>
            <person name="Rose M."/>
            <person name="Schlueter T."/>
            <person name="Simoes N."/>
            <person name="Tierrez A."/>
            <person name="Vazquez-Boland J.-A."/>
            <person name="Voss H."/>
            <person name="Wehland J."/>
            <person name="Cossart P."/>
        </authorList>
    </citation>
    <scope>NUCLEOTIDE SEQUENCE [LARGE SCALE GENOMIC DNA]</scope>
    <source>
        <strain>ATCC BAA-679 / EGD-e</strain>
    </source>
</reference>
<evidence type="ECO:0000250" key="1"/>
<evidence type="ECO:0000305" key="2"/>
<keyword id="KW-0963">Cytoplasm</keyword>
<keyword id="KW-0488">Methylation</keyword>
<keyword id="KW-0648">Protein biosynthesis</keyword>
<keyword id="KW-1185">Reference proteome</keyword>
<keyword id="KW-0688">Ribosomal frameshifting</keyword>
<sequence length="366" mass="41996">MELAEIRNELEKTAQQIKDFRGSLDLDSMEVRIAELEDQMLDPNFWNDQQAAQKVINESNGYKETYQAFHALEEEQESMEISLELLKEEADEDLQEELEKDIKAYMATISAFELKLMLSDPYDKNNAILELHPGAGGTESQDWGSMLLRMYQRWSEKKGFKVEMLDYQAGDEAGIKSVTLLIKGHNAYGYLKAEKGVHRLVRISPFDSSGRRHTSFVSVDVMPELDGDIEIEVRTEDLKIDTYRATGAGGQHINTTDSAVRMTHIPSGIVVTCQSERSQLKNREQAMKMLKTKLYQKEQEEKERELAEIRGEQKEIGWGSQIRSYVFHPYSMVKDHRTNYETGNIQAVMDGDLDDFINAYLRSRIG</sequence>
<feature type="chain" id="PRO_0000166829" description="Peptide chain release factor 2">
    <location>
        <begin position="1"/>
        <end position="366"/>
    </location>
</feature>
<feature type="modified residue" description="N5-methylglutamine" evidence="1">
    <location>
        <position position="251"/>
    </location>
</feature>
<name>RF2_LISMO</name>
<gene>
    <name type="primary">prfB</name>
    <name type="ordered locus">lmo2509</name>
</gene>
<comment type="function">
    <text evidence="1">Peptide chain release factor 2 directs the termination of translation in response to the peptide chain termination codons UGA and UAA.</text>
</comment>
<comment type="subcellular location">
    <subcellularLocation>
        <location evidence="1">Cytoplasm</location>
    </subcellularLocation>
</comment>
<comment type="PTM">
    <text evidence="1">Methylated by PrmC. Methylation increases the termination efficiency of RF2 (By similarity).</text>
</comment>
<comment type="miscellaneous">
    <text evidence="1">The gene for this protein contains a UGA in-frame termination codon after Leu-24; a naturally occurring frameshift enables complete translation of RF-2. This provides a mechanism for the protein to regulate its own production (By similarity).</text>
</comment>
<comment type="similarity">
    <text evidence="2">Belongs to the prokaryotic/mitochondrial release factor family.</text>
</comment>
<comment type="sequence caution" evidence="2">
    <conflict type="erroneous initiation">
        <sequence resource="EMBL-CDS" id="CAD00587"/>
    </conflict>
</comment>
<proteinExistence type="inferred from homology"/>
<accession>Q8Y4D8</accession>
<organism>
    <name type="scientific">Listeria monocytogenes serovar 1/2a (strain ATCC BAA-679 / EGD-e)</name>
    <dbReference type="NCBI Taxonomy" id="169963"/>
    <lineage>
        <taxon>Bacteria</taxon>
        <taxon>Bacillati</taxon>
        <taxon>Bacillota</taxon>
        <taxon>Bacilli</taxon>
        <taxon>Bacillales</taxon>
        <taxon>Listeriaceae</taxon>
        <taxon>Listeria</taxon>
    </lineage>
</organism>